<feature type="chain" id="PRO_0000145041" description="Carbamoyl phosphate synthase large chain">
    <location>
        <begin position="1"/>
        <end position="1057"/>
    </location>
</feature>
<feature type="domain" description="ATP-grasp 1" evidence="1">
    <location>
        <begin position="133"/>
        <end position="327"/>
    </location>
</feature>
<feature type="domain" description="ATP-grasp 2" evidence="1">
    <location>
        <begin position="671"/>
        <end position="861"/>
    </location>
</feature>
<feature type="domain" description="MGS-like" evidence="1">
    <location>
        <begin position="930"/>
        <end position="1057"/>
    </location>
</feature>
<feature type="region of interest" description="Carboxyphosphate synthetic domain" evidence="1">
    <location>
        <begin position="1"/>
        <end position="401"/>
    </location>
</feature>
<feature type="region of interest" description="Oligomerization domain" evidence="1">
    <location>
        <begin position="402"/>
        <end position="546"/>
    </location>
</feature>
<feature type="region of interest" description="Carbamoyl phosphate synthetic domain" evidence="1">
    <location>
        <begin position="547"/>
        <end position="929"/>
    </location>
</feature>
<feature type="region of interest" description="Allosteric domain" evidence="1">
    <location>
        <begin position="930"/>
        <end position="1057"/>
    </location>
</feature>
<feature type="binding site" evidence="1">
    <location>
        <position position="129"/>
    </location>
    <ligand>
        <name>ATP</name>
        <dbReference type="ChEBI" id="CHEBI:30616"/>
        <label>1</label>
    </ligand>
</feature>
<feature type="binding site" evidence="1">
    <location>
        <position position="169"/>
    </location>
    <ligand>
        <name>ATP</name>
        <dbReference type="ChEBI" id="CHEBI:30616"/>
        <label>1</label>
    </ligand>
</feature>
<feature type="binding site" evidence="1">
    <location>
        <position position="175"/>
    </location>
    <ligand>
        <name>ATP</name>
        <dbReference type="ChEBI" id="CHEBI:30616"/>
        <label>1</label>
    </ligand>
</feature>
<feature type="binding site" evidence="1">
    <location>
        <position position="176"/>
    </location>
    <ligand>
        <name>ATP</name>
        <dbReference type="ChEBI" id="CHEBI:30616"/>
        <label>1</label>
    </ligand>
</feature>
<feature type="binding site" evidence="1">
    <location>
        <position position="208"/>
    </location>
    <ligand>
        <name>ATP</name>
        <dbReference type="ChEBI" id="CHEBI:30616"/>
        <label>1</label>
    </ligand>
</feature>
<feature type="binding site" evidence="1">
    <location>
        <position position="210"/>
    </location>
    <ligand>
        <name>ATP</name>
        <dbReference type="ChEBI" id="CHEBI:30616"/>
        <label>1</label>
    </ligand>
</feature>
<feature type="binding site" evidence="1">
    <location>
        <position position="215"/>
    </location>
    <ligand>
        <name>ATP</name>
        <dbReference type="ChEBI" id="CHEBI:30616"/>
        <label>1</label>
    </ligand>
</feature>
<feature type="binding site" evidence="1">
    <location>
        <position position="241"/>
    </location>
    <ligand>
        <name>ATP</name>
        <dbReference type="ChEBI" id="CHEBI:30616"/>
        <label>1</label>
    </ligand>
</feature>
<feature type="binding site" evidence="1">
    <location>
        <position position="242"/>
    </location>
    <ligand>
        <name>ATP</name>
        <dbReference type="ChEBI" id="CHEBI:30616"/>
        <label>1</label>
    </ligand>
</feature>
<feature type="binding site" evidence="1">
    <location>
        <position position="243"/>
    </location>
    <ligand>
        <name>ATP</name>
        <dbReference type="ChEBI" id="CHEBI:30616"/>
        <label>1</label>
    </ligand>
</feature>
<feature type="binding site" evidence="1">
    <location>
        <position position="284"/>
    </location>
    <ligand>
        <name>ATP</name>
        <dbReference type="ChEBI" id="CHEBI:30616"/>
        <label>1</label>
    </ligand>
</feature>
<feature type="binding site" evidence="1">
    <location>
        <position position="284"/>
    </location>
    <ligand>
        <name>Mg(2+)</name>
        <dbReference type="ChEBI" id="CHEBI:18420"/>
        <label>1</label>
    </ligand>
</feature>
<feature type="binding site" evidence="1">
    <location>
        <position position="284"/>
    </location>
    <ligand>
        <name>Mn(2+)</name>
        <dbReference type="ChEBI" id="CHEBI:29035"/>
        <label>1</label>
    </ligand>
</feature>
<feature type="binding site" evidence="1">
    <location>
        <position position="298"/>
    </location>
    <ligand>
        <name>ATP</name>
        <dbReference type="ChEBI" id="CHEBI:30616"/>
        <label>1</label>
    </ligand>
</feature>
<feature type="binding site" evidence="1">
    <location>
        <position position="298"/>
    </location>
    <ligand>
        <name>Mg(2+)</name>
        <dbReference type="ChEBI" id="CHEBI:18420"/>
        <label>1</label>
    </ligand>
</feature>
<feature type="binding site" evidence="1">
    <location>
        <position position="298"/>
    </location>
    <ligand>
        <name>Mg(2+)</name>
        <dbReference type="ChEBI" id="CHEBI:18420"/>
        <label>2</label>
    </ligand>
</feature>
<feature type="binding site" evidence="1">
    <location>
        <position position="298"/>
    </location>
    <ligand>
        <name>Mn(2+)</name>
        <dbReference type="ChEBI" id="CHEBI:29035"/>
        <label>1</label>
    </ligand>
</feature>
<feature type="binding site" evidence="1">
    <location>
        <position position="298"/>
    </location>
    <ligand>
        <name>Mn(2+)</name>
        <dbReference type="ChEBI" id="CHEBI:29035"/>
        <label>2</label>
    </ligand>
</feature>
<feature type="binding site" evidence="1">
    <location>
        <position position="300"/>
    </location>
    <ligand>
        <name>Mg(2+)</name>
        <dbReference type="ChEBI" id="CHEBI:18420"/>
        <label>2</label>
    </ligand>
</feature>
<feature type="binding site" evidence="1">
    <location>
        <position position="300"/>
    </location>
    <ligand>
        <name>Mn(2+)</name>
        <dbReference type="ChEBI" id="CHEBI:29035"/>
        <label>2</label>
    </ligand>
</feature>
<feature type="binding site" evidence="1">
    <location>
        <position position="707"/>
    </location>
    <ligand>
        <name>ATP</name>
        <dbReference type="ChEBI" id="CHEBI:30616"/>
        <label>2</label>
    </ligand>
</feature>
<feature type="binding site" evidence="1">
    <location>
        <position position="746"/>
    </location>
    <ligand>
        <name>ATP</name>
        <dbReference type="ChEBI" id="CHEBI:30616"/>
        <label>2</label>
    </ligand>
</feature>
<feature type="binding site" evidence="1">
    <location>
        <position position="748"/>
    </location>
    <ligand>
        <name>ATP</name>
        <dbReference type="ChEBI" id="CHEBI:30616"/>
        <label>2</label>
    </ligand>
</feature>
<feature type="binding site" evidence="1">
    <location>
        <position position="752"/>
    </location>
    <ligand>
        <name>ATP</name>
        <dbReference type="ChEBI" id="CHEBI:30616"/>
        <label>2</label>
    </ligand>
</feature>
<feature type="binding site" evidence="1">
    <location>
        <position position="777"/>
    </location>
    <ligand>
        <name>ATP</name>
        <dbReference type="ChEBI" id="CHEBI:30616"/>
        <label>2</label>
    </ligand>
</feature>
<feature type="binding site" evidence="1">
    <location>
        <position position="778"/>
    </location>
    <ligand>
        <name>ATP</name>
        <dbReference type="ChEBI" id="CHEBI:30616"/>
        <label>2</label>
    </ligand>
</feature>
<feature type="binding site" evidence="1">
    <location>
        <position position="779"/>
    </location>
    <ligand>
        <name>ATP</name>
        <dbReference type="ChEBI" id="CHEBI:30616"/>
        <label>2</label>
    </ligand>
</feature>
<feature type="binding site" evidence="1">
    <location>
        <position position="780"/>
    </location>
    <ligand>
        <name>ATP</name>
        <dbReference type="ChEBI" id="CHEBI:30616"/>
        <label>2</label>
    </ligand>
</feature>
<feature type="binding site" evidence="1">
    <location>
        <position position="820"/>
    </location>
    <ligand>
        <name>ATP</name>
        <dbReference type="ChEBI" id="CHEBI:30616"/>
        <label>2</label>
    </ligand>
</feature>
<feature type="binding site" evidence="1">
    <location>
        <position position="820"/>
    </location>
    <ligand>
        <name>Mg(2+)</name>
        <dbReference type="ChEBI" id="CHEBI:18420"/>
        <label>3</label>
    </ligand>
</feature>
<feature type="binding site" evidence="1">
    <location>
        <position position="820"/>
    </location>
    <ligand>
        <name>Mn(2+)</name>
        <dbReference type="ChEBI" id="CHEBI:29035"/>
        <label>3</label>
    </ligand>
</feature>
<feature type="binding site" evidence="1">
    <location>
        <position position="832"/>
    </location>
    <ligand>
        <name>ATP</name>
        <dbReference type="ChEBI" id="CHEBI:30616"/>
        <label>2</label>
    </ligand>
</feature>
<feature type="binding site" evidence="1">
    <location>
        <position position="832"/>
    </location>
    <ligand>
        <name>Mg(2+)</name>
        <dbReference type="ChEBI" id="CHEBI:18420"/>
        <label>3</label>
    </ligand>
</feature>
<feature type="binding site" evidence="1">
    <location>
        <position position="832"/>
    </location>
    <ligand>
        <name>Mg(2+)</name>
        <dbReference type="ChEBI" id="CHEBI:18420"/>
        <label>4</label>
    </ligand>
</feature>
<feature type="binding site" evidence="1">
    <location>
        <position position="832"/>
    </location>
    <ligand>
        <name>Mn(2+)</name>
        <dbReference type="ChEBI" id="CHEBI:29035"/>
        <label>3</label>
    </ligand>
</feature>
<feature type="binding site" evidence="1">
    <location>
        <position position="832"/>
    </location>
    <ligand>
        <name>Mn(2+)</name>
        <dbReference type="ChEBI" id="CHEBI:29035"/>
        <label>4</label>
    </ligand>
</feature>
<feature type="binding site" evidence="1">
    <location>
        <position position="834"/>
    </location>
    <ligand>
        <name>Mg(2+)</name>
        <dbReference type="ChEBI" id="CHEBI:18420"/>
        <label>4</label>
    </ligand>
</feature>
<feature type="binding site" evidence="1">
    <location>
        <position position="834"/>
    </location>
    <ligand>
        <name>Mn(2+)</name>
        <dbReference type="ChEBI" id="CHEBI:29035"/>
        <label>4</label>
    </ligand>
</feature>
<keyword id="KW-0028">Amino-acid biosynthesis</keyword>
<keyword id="KW-0055">Arginine biosynthesis</keyword>
<keyword id="KW-0067">ATP-binding</keyword>
<keyword id="KW-0436">Ligase</keyword>
<keyword id="KW-0460">Magnesium</keyword>
<keyword id="KW-0464">Manganese</keyword>
<keyword id="KW-0479">Metal-binding</keyword>
<keyword id="KW-0547">Nucleotide-binding</keyword>
<keyword id="KW-0665">Pyrimidine biosynthesis</keyword>
<keyword id="KW-0677">Repeat</keyword>
<dbReference type="EC" id="6.3.4.16" evidence="1"/>
<dbReference type="EC" id="6.3.5.5" evidence="1"/>
<dbReference type="EMBL" id="BX571857">
    <property type="protein sequence ID" value="CAG42914.1"/>
    <property type="molecule type" value="Genomic_DNA"/>
</dbReference>
<dbReference type="RefSeq" id="WP_001126264.1">
    <property type="nucleotide sequence ID" value="NC_002953.3"/>
</dbReference>
<dbReference type="SMR" id="Q6GA10"/>
<dbReference type="KEGG" id="sas:SAS1137"/>
<dbReference type="HOGENOM" id="CLU_000513_1_2_9"/>
<dbReference type="UniPathway" id="UPA00068">
    <property type="reaction ID" value="UER00171"/>
</dbReference>
<dbReference type="UniPathway" id="UPA00070">
    <property type="reaction ID" value="UER00115"/>
</dbReference>
<dbReference type="GO" id="GO:0005737">
    <property type="term" value="C:cytoplasm"/>
    <property type="evidence" value="ECO:0007669"/>
    <property type="project" value="TreeGrafter"/>
</dbReference>
<dbReference type="GO" id="GO:0005524">
    <property type="term" value="F:ATP binding"/>
    <property type="evidence" value="ECO:0007669"/>
    <property type="project" value="UniProtKB-UniRule"/>
</dbReference>
<dbReference type="GO" id="GO:0004087">
    <property type="term" value="F:carbamoyl-phosphate synthase (ammonia) activity"/>
    <property type="evidence" value="ECO:0007669"/>
    <property type="project" value="RHEA"/>
</dbReference>
<dbReference type="GO" id="GO:0004088">
    <property type="term" value="F:carbamoyl-phosphate synthase (glutamine-hydrolyzing) activity"/>
    <property type="evidence" value="ECO:0007669"/>
    <property type="project" value="UniProtKB-UniRule"/>
</dbReference>
<dbReference type="GO" id="GO:0046872">
    <property type="term" value="F:metal ion binding"/>
    <property type="evidence" value="ECO:0007669"/>
    <property type="project" value="UniProtKB-KW"/>
</dbReference>
<dbReference type="GO" id="GO:0044205">
    <property type="term" value="P:'de novo' UMP biosynthetic process"/>
    <property type="evidence" value="ECO:0007669"/>
    <property type="project" value="UniProtKB-UniRule"/>
</dbReference>
<dbReference type="GO" id="GO:0006541">
    <property type="term" value="P:glutamine metabolic process"/>
    <property type="evidence" value="ECO:0007669"/>
    <property type="project" value="TreeGrafter"/>
</dbReference>
<dbReference type="GO" id="GO:0006526">
    <property type="term" value="P:L-arginine biosynthetic process"/>
    <property type="evidence" value="ECO:0007669"/>
    <property type="project" value="UniProtKB-UniRule"/>
</dbReference>
<dbReference type="CDD" id="cd01424">
    <property type="entry name" value="MGS_CPS_II"/>
    <property type="match status" value="1"/>
</dbReference>
<dbReference type="FunFam" id="1.10.1030.10:FF:000002">
    <property type="entry name" value="Carbamoyl-phosphate synthase large chain"/>
    <property type="match status" value="1"/>
</dbReference>
<dbReference type="FunFam" id="3.30.1490.20:FF:000001">
    <property type="entry name" value="Carbamoyl-phosphate synthase large chain"/>
    <property type="match status" value="1"/>
</dbReference>
<dbReference type="FunFam" id="3.30.470.20:FF:000001">
    <property type="entry name" value="Carbamoyl-phosphate synthase large chain"/>
    <property type="match status" value="1"/>
</dbReference>
<dbReference type="FunFam" id="3.30.470.20:FF:000026">
    <property type="entry name" value="Carbamoyl-phosphate synthase large chain"/>
    <property type="match status" value="1"/>
</dbReference>
<dbReference type="FunFam" id="3.40.50.1380:FF:000011">
    <property type="entry name" value="Carbamoyl-phosphate synthase large chain"/>
    <property type="match status" value="1"/>
</dbReference>
<dbReference type="FunFam" id="3.40.50.20:FF:000001">
    <property type="entry name" value="Carbamoyl-phosphate synthase large chain"/>
    <property type="match status" value="2"/>
</dbReference>
<dbReference type="Gene3D" id="3.40.50.20">
    <property type="match status" value="2"/>
</dbReference>
<dbReference type="Gene3D" id="3.30.1490.20">
    <property type="entry name" value="ATP-grasp fold, A domain"/>
    <property type="match status" value="1"/>
</dbReference>
<dbReference type="Gene3D" id="3.30.470.20">
    <property type="entry name" value="ATP-grasp fold, B domain"/>
    <property type="match status" value="2"/>
</dbReference>
<dbReference type="Gene3D" id="1.10.1030.10">
    <property type="entry name" value="Carbamoyl-phosphate synthetase, large subunit oligomerisation domain"/>
    <property type="match status" value="1"/>
</dbReference>
<dbReference type="Gene3D" id="3.40.50.1380">
    <property type="entry name" value="Methylglyoxal synthase-like domain"/>
    <property type="match status" value="1"/>
</dbReference>
<dbReference type="HAMAP" id="MF_01210_A">
    <property type="entry name" value="CPSase_L_chain_A"/>
    <property type="match status" value="1"/>
</dbReference>
<dbReference type="HAMAP" id="MF_01210_B">
    <property type="entry name" value="CPSase_L_chain_B"/>
    <property type="match status" value="1"/>
</dbReference>
<dbReference type="InterPro" id="IPR011761">
    <property type="entry name" value="ATP-grasp"/>
</dbReference>
<dbReference type="InterPro" id="IPR013815">
    <property type="entry name" value="ATP_grasp_subdomain_1"/>
</dbReference>
<dbReference type="InterPro" id="IPR006275">
    <property type="entry name" value="CarbamoylP_synth_lsu"/>
</dbReference>
<dbReference type="InterPro" id="IPR005480">
    <property type="entry name" value="CarbamoylP_synth_lsu_oligo"/>
</dbReference>
<dbReference type="InterPro" id="IPR036897">
    <property type="entry name" value="CarbamoylP_synth_lsu_oligo_sf"/>
</dbReference>
<dbReference type="InterPro" id="IPR005479">
    <property type="entry name" value="CbamoylP_synth_lsu-like_ATP-bd"/>
</dbReference>
<dbReference type="InterPro" id="IPR005483">
    <property type="entry name" value="CbamoylP_synth_lsu_CPSase_dom"/>
</dbReference>
<dbReference type="InterPro" id="IPR011607">
    <property type="entry name" value="MGS-like_dom"/>
</dbReference>
<dbReference type="InterPro" id="IPR036914">
    <property type="entry name" value="MGS-like_dom_sf"/>
</dbReference>
<dbReference type="InterPro" id="IPR033937">
    <property type="entry name" value="MGS_CPS_CarB"/>
</dbReference>
<dbReference type="InterPro" id="IPR016185">
    <property type="entry name" value="PreATP-grasp_dom_sf"/>
</dbReference>
<dbReference type="NCBIfam" id="TIGR01369">
    <property type="entry name" value="CPSaseII_lrg"/>
    <property type="match status" value="1"/>
</dbReference>
<dbReference type="NCBIfam" id="NF003671">
    <property type="entry name" value="PRK05294.1"/>
    <property type="match status" value="1"/>
</dbReference>
<dbReference type="NCBIfam" id="NF009455">
    <property type="entry name" value="PRK12815.1"/>
    <property type="match status" value="1"/>
</dbReference>
<dbReference type="PANTHER" id="PTHR11405:SF53">
    <property type="entry name" value="CARBAMOYL-PHOSPHATE SYNTHASE [AMMONIA], MITOCHONDRIAL"/>
    <property type="match status" value="1"/>
</dbReference>
<dbReference type="PANTHER" id="PTHR11405">
    <property type="entry name" value="CARBAMOYLTRANSFERASE FAMILY MEMBER"/>
    <property type="match status" value="1"/>
</dbReference>
<dbReference type="Pfam" id="PF02786">
    <property type="entry name" value="CPSase_L_D2"/>
    <property type="match status" value="2"/>
</dbReference>
<dbReference type="Pfam" id="PF02787">
    <property type="entry name" value="CPSase_L_D3"/>
    <property type="match status" value="1"/>
</dbReference>
<dbReference type="Pfam" id="PF02142">
    <property type="entry name" value="MGS"/>
    <property type="match status" value="1"/>
</dbReference>
<dbReference type="PRINTS" id="PR00098">
    <property type="entry name" value="CPSASE"/>
</dbReference>
<dbReference type="SMART" id="SM01096">
    <property type="entry name" value="CPSase_L_D3"/>
    <property type="match status" value="1"/>
</dbReference>
<dbReference type="SMART" id="SM01209">
    <property type="entry name" value="GARS_A"/>
    <property type="match status" value="1"/>
</dbReference>
<dbReference type="SMART" id="SM00851">
    <property type="entry name" value="MGS"/>
    <property type="match status" value="1"/>
</dbReference>
<dbReference type="SUPFAM" id="SSF48108">
    <property type="entry name" value="Carbamoyl phosphate synthetase, large subunit connection domain"/>
    <property type="match status" value="1"/>
</dbReference>
<dbReference type="SUPFAM" id="SSF56059">
    <property type="entry name" value="Glutathione synthetase ATP-binding domain-like"/>
    <property type="match status" value="2"/>
</dbReference>
<dbReference type="SUPFAM" id="SSF52335">
    <property type="entry name" value="Methylglyoxal synthase-like"/>
    <property type="match status" value="1"/>
</dbReference>
<dbReference type="SUPFAM" id="SSF52440">
    <property type="entry name" value="PreATP-grasp domain"/>
    <property type="match status" value="2"/>
</dbReference>
<dbReference type="PROSITE" id="PS50975">
    <property type="entry name" value="ATP_GRASP"/>
    <property type="match status" value="2"/>
</dbReference>
<dbReference type="PROSITE" id="PS00866">
    <property type="entry name" value="CPSASE_1"/>
    <property type="match status" value="2"/>
</dbReference>
<dbReference type="PROSITE" id="PS00867">
    <property type="entry name" value="CPSASE_2"/>
    <property type="match status" value="2"/>
</dbReference>
<dbReference type="PROSITE" id="PS51855">
    <property type="entry name" value="MGS"/>
    <property type="match status" value="1"/>
</dbReference>
<evidence type="ECO:0000255" key="1">
    <source>
        <dbReference type="HAMAP-Rule" id="MF_01210"/>
    </source>
</evidence>
<organism>
    <name type="scientific">Staphylococcus aureus (strain MSSA476)</name>
    <dbReference type="NCBI Taxonomy" id="282459"/>
    <lineage>
        <taxon>Bacteria</taxon>
        <taxon>Bacillati</taxon>
        <taxon>Bacillota</taxon>
        <taxon>Bacilli</taxon>
        <taxon>Bacillales</taxon>
        <taxon>Staphylococcaceae</taxon>
        <taxon>Staphylococcus</taxon>
    </lineage>
</organism>
<proteinExistence type="inferred from homology"/>
<accession>Q6GA10</accession>
<protein>
    <recommendedName>
        <fullName evidence="1">Carbamoyl phosphate synthase large chain</fullName>
        <ecNumber evidence="1">6.3.4.16</ecNumber>
        <ecNumber evidence="1">6.3.5.5</ecNumber>
    </recommendedName>
    <alternativeName>
        <fullName evidence="1">Carbamoyl phosphate synthetase ammonia chain</fullName>
    </alternativeName>
</protein>
<sequence>MPKRNDIKTILVIGSGPIIIGQAAEFDYAGTQACLALKEEGYRVILVNSNPATIMTDKEIADKVYIEPLTHDFIARIIRKEQPDALLPTLGGQTGLNMAIQLHESGVLQDNNVQLLGTELTSIQQAEDREMFRTLMNDLNVPVPESDIVNTVEQAFKFKEQVGYPLIVRPAFTMGGTGGGICHNDEELHEIVSNGLHYSPATQCLLEKSIAGFKEIEYEVMRDKNDNAIVVCNMENIDPVGIHTGDSIVVAPSQTLSDVEYQMLRDVSLKVIRALGIEGGCNVQLALDPHSFDYYIIEVNPRVSRSSALASKATGYPIAKLAAKIAVGLTLDEMLNPITGTSYAAFEPTLDYVISKIPRFPFDKFEKGERELGTQMKATGEVMAIGRTYEESLLKAIRSLEYGVHHLGLPNGESFDLDYIKERISHQDDERLFFIGEAIRRGTTLEEIHNMTQIDYFFLHKFQNIIDIEHQLKEHQGDLEYLKYAKDYGFSDKTIAHRFNMTEEEVYQLRMENDIKPVYKMVDTCAAEFESSTPYYYGTYETENESIVTDKEKILVLGSGPIRIGQGVEFDYATVHAVWAIQKAGYEAIIVNNNPETVSTDFSISDKLYFEPLTEEDVMNIINLEKPKGVVVQFGGQTAINLADKLAKHGVKILGTSLENLNRAEDRKEFEALLRKINVPQPQGKTATSPEEALANAAEIGYPVVVRPSYVLGGRAMEIVDNDKELENYMTQAVKASPEHPVLVDRYLTGKEIEVDAICDGETVIIPGIMEHIERAGVHSGDSIAVYPPQTLTEDELATLEDYTIKLAKGLNIIGLINIQFVIAHDGVYVLEVNPRSSRTVPFLSKITDIPMAQLAMRAIIGEKLTDMGYQEGVQPYAEGVFVKAPVFSFNKLKNVDITLGPEMKSTGEVMGKDTTLEKALFKGLTGSGVEVKDHGTVLMTVSDKDKEEVVKLAQRLNEVGYKILATSGTANKLAEYDIPAEVVGKIGGENDLLTRIQNGDVQIVINTMTKGKEVERDGFQIRRTTVENGIPCLTSLDTANALTNVIESMTFTMRQM</sequence>
<name>CARB_STAAS</name>
<gene>
    <name evidence="1" type="primary">carB</name>
    <name type="synonym">pyrAB</name>
    <name type="ordered locus">SAS1137</name>
</gene>
<comment type="function">
    <text evidence="1">Large subunit of the glutamine-dependent carbamoyl phosphate synthetase (CPSase). CPSase catalyzes the formation of carbamoyl phosphate from the ammonia moiety of glutamine, carbonate, and phosphate donated by ATP, constituting the first step of 2 biosynthetic pathways, one leading to arginine and/or urea and the other to pyrimidine nucleotides. The large subunit (synthetase) binds the substrates ammonia (free or transferred from glutamine from the small subunit), hydrogencarbonate and ATP and carries out an ATP-coupled ligase reaction, activating hydrogencarbonate by forming carboxy phosphate which reacts with ammonia to form carbamoyl phosphate.</text>
</comment>
<comment type="catalytic activity">
    <reaction evidence="1">
        <text>hydrogencarbonate + L-glutamine + 2 ATP + H2O = carbamoyl phosphate + L-glutamate + 2 ADP + phosphate + 2 H(+)</text>
        <dbReference type="Rhea" id="RHEA:18633"/>
        <dbReference type="ChEBI" id="CHEBI:15377"/>
        <dbReference type="ChEBI" id="CHEBI:15378"/>
        <dbReference type="ChEBI" id="CHEBI:17544"/>
        <dbReference type="ChEBI" id="CHEBI:29985"/>
        <dbReference type="ChEBI" id="CHEBI:30616"/>
        <dbReference type="ChEBI" id="CHEBI:43474"/>
        <dbReference type="ChEBI" id="CHEBI:58228"/>
        <dbReference type="ChEBI" id="CHEBI:58359"/>
        <dbReference type="ChEBI" id="CHEBI:456216"/>
        <dbReference type="EC" id="6.3.5.5"/>
    </reaction>
</comment>
<comment type="catalytic activity">
    <molecule>Carbamoyl phosphate synthase large chain</molecule>
    <reaction evidence="1">
        <text>hydrogencarbonate + NH4(+) + 2 ATP = carbamoyl phosphate + 2 ADP + phosphate + 2 H(+)</text>
        <dbReference type="Rhea" id="RHEA:18029"/>
        <dbReference type="ChEBI" id="CHEBI:15378"/>
        <dbReference type="ChEBI" id="CHEBI:17544"/>
        <dbReference type="ChEBI" id="CHEBI:28938"/>
        <dbReference type="ChEBI" id="CHEBI:30616"/>
        <dbReference type="ChEBI" id="CHEBI:43474"/>
        <dbReference type="ChEBI" id="CHEBI:58228"/>
        <dbReference type="ChEBI" id="CHEBI:456216"/>
        <dbReference type="EC" id="6.3.4.16"/>
    </reaction>
</comment>
<comment type="cofactor">
    <cofactor evidence="1">
        <name>Mg(2+)</name>
        <dbReference type="ChEBI" id="CHEBI:18420"/>
    </cofactor>
    <cofactor evidence="1">
        <name>Mn(2+)</name>
        <dbReference type="ChEBI" id="CHEBI:29035"/>
    </cofactor>
    <text evidence="1">Binds 4 Mg(2+) or Mn(2+) ions per subunit.</text>
</comment>
<comment type="pathway">
    <text evidence="1">Amino-acid biosynthesis; L-arginine biosynthesis; carbamoyl phosphate from bicarbonate: step 1/1.</text>
</comment>
<comment type="pathway">
    <text evidence="1">Pyrimidine metabolism; UMP biosynthesis via de novo pathway; (S)-dihydroorotate from bicarbonate: step 1/3.</text>
</comment>
<comment type="subunit">
    <text evidence="1">Composed of two chains; the small (or glutamine) chain promotes the hydrolysis of glutamine to ammonia, which is used by the large (or ammonia) chain to synthesize carbamoyl phosphate. Tetramer of heterodimers (alpha,beta)4.</text>
</comment>
<comment type="domain">
    <text evidence="1">The large subunit is composed of 2 ATP-grasp domains that are involved in binding the 2 ATP molecules needed for carbamoyl phosphate synthesis. The N-terminal ATP-grasp domain (referred to as the carboxyphosphate synthetic component) catalyzes the ATP-dependent phosphorylation of hydrogencarbonate to carboxyphosphate and the subsequent nucleophilic attack by ammonia to form a carbamate intermediate. The C-terminal ATP-grasp domain (referred to as the carbamoyl phosphate synthetic component) then catalyzes the phosphorylation of carbamate with the second ATP to form the end product carbamoyl phosphate. The reactive and unstable enzyme intermediates are sequentially channeled from one active site to the next through the interior of the protein over a distance of at least 96 A.</text>
</comment>
<comment type="similarity">
    <text evidence="1">Belongs to the CarB family.</text>
</comment>
<reference key="1">
    <citation type="journal article" date="2004" name="Proc. Natl. Acad. Sci. U.S.A.">
        <title>Complete genomes of two clinical Staphylococcus aureus strains: evidence for the rapid evolution of virulence and drug resistance.</title>
        <authorList>
            <person name="Holden M.T.G."/>
            <person name="Feil E.J."/>
            <person name="Lindsay J.A."/>
            <person name="Peacock S.J."/>
            <person name="Day N.P.J."/>
            <person name="Enright M.C."/>
            <person name="Foster T.J."/>
            <person name="Moore C.E."/>
            <person name="Hurst L."/>
            <person name="Atkin R."/>
            <person name="Barron A."/>
            <person name="Bason N."/>
            <person name="Bentley S.D."/>
            <person name="Chillingworth C."/>
            <person name="Chillingworth T."/>
            <person name="Churcher C."/>
            <person name="Clark L."/>
            <person name="Corton C."/>
            <person name="Cronin A."/>
            <person name="Doggett J."/>
            <person name="Dowd L."/>
            <person name="Feltwell T."/>
            <person name="Hance Z."/>
            <person name="Harris B."/>
            <person name="Hauser H."/>
            <person name="Holroyd S."/>
            <person name="Jagels K."/>
            <person name="James K.D."/>
            <person name="Lennard N."/>
            <person name="Line A."/>
            <person name="Mayes R."/>
            <person name="Moule S."/>
            <person name="Mungall K."/>
            <person name="Ormond D."/>
            <person name="Quail M.A."/>
            <person name="Rabbinowitsch E."/>
            <person name="Rutherford K.M."/>
            <person name="Sanders M."/>
            <person name="Sharp S."/>
            <person name="Simmonds M."/>
            <person name="Stevens K."/>
            <person name="Whitehead S."/>
            <person name="Barrell B.G."/>
            <person name="Spratt B.G."/>
            <person name="Parkhill J."/>
        </authorList>
    </citation>
    <scope>NUCLEOTIDE SEQUENCE [LARGE SCALE GENOMIC DNA]</scope>
    <source>
        <strain>MSSA476</strain>
    </source>
</reference>